<dbReference type="EC" id="2.7.9.1" evidence="3"/>
<dbReference type="EMBL" id="AJ235272">
    <property type="protein sequence ID" value="CAA14944.1"/>
    <property type="molecule type" value="Genomic_DNA"/>
</dbReference>
<dbReference type="PIR" id="F71652">
    <property type="entry name" value="F71652"/>
</dbReference>
<dbReference type="RefSeq" id="NP_220868.1">
    <property type="nucleotide sequence ID" value="NC_000963.1"/>
</dbReference>
<dbReference type="RefSeq" id="WP_004597734.1">
    <property type="nucleotide sequence ID" value="NC_000963.1"/>
</dbReference>
<dbReference type="SMR" id="Q9ZD55"/>
<dbReference type="STRING" id="272947.gene:17555572"/>
<dbReference type="EnsemblBacteria" id="CAA14944">
    <property type="protein sequence ID" value="CAA14944"/>
    <property type="gene ID" value="CAA14944"/>
</dbReference>
<dbReference type="GeneID" id="57569616"/>
<dbReference type="KEGG" id="rpr:RP492"/>
<dbReference type="PATRIC" id="fig|272947.5.peg.501"/>
<dbReference type="eggNOG" id="COG0574">
    <property type="taxonomic scope" value="Bacteria"/>
</dbReference>
<dbReference type="eggNOG" id="COG1080">
    <property type="taxonomic scope" value="Bacteria"/>
</dbReference>
<dbReference type="HOGENOM" id="CLU_015345_0_2_5"/>
<dbReference type="OrthoDB" id="9765468at2"/>
<dbReference type="Proteomes" id="UP000002480">
    <property type="component" value="Chromosome"/>
</dbReference>
<dbReference type="GO" id="GO:0005524">
    <property type="term" value="F:ATP binding"/>
    <property type="evidence" value="ECO:0007669"/>
    <property type="project" value="UniProtKB-KW"/>
</dbReference>
<dbReference type="GO" id="GO:0016301">
    <property type="term" value="F:kinase activity"/>
    <property type="evidence" value="ECO:0007669"/>
    <property type="project" value="UniProtKB-KW"/>
</dbReference>
<dbReference type="GO" id="GO:0046872">
    <property type="term" value="F:metal ion binding"/>
    <property type="evidence" value="ECO:0007669"/>
    <property type="project" value="UniProtKB-KW"/>
</dbReference>
<dbReference type="GO" id="GO:0050242">
    <property type="term" value="F:pyruvate, phosphate dikinase activity"/>
    <property type="evidence" value="ECO:0007669"/>
    <property type="project" value="UniProtKB-EC"/>
</dbReference>
<dbReference type="Gene3D" id="1.20.80.30">
    <property type="match status" value="1"/>
</dbReference>
<dbReference type="Gene3D" id="3.30.1490.20">
    <property type="entry name" value="ATP-grasp fold, A domain"/>
    <property type="match status" value="1"/>
</dbReference>
<dbReference type="Gene3D" id="3.30.470.20">
    <property type="entry name" value="ATP-grasp fold, B domain"/>
    <property type="match status" value="1"/>
</dbReference>
<dbReference type="Gene3D" id="3.20.20.60">
    <property type="entry name" value="Phosphoenolpyruvate-binding domains"/>
    <property type="match status" value="1"/>
</dbReference>
<dbReference type="Gene3D" id="3.50.30.10">
    <property type="entry name" value="Phosphohistidine domain"/>
    <property type="match status" value="1"/>
</dbReference>
<dbReference type="Gene3D" id="1.10.189.10">
    <property type="entry name" value="Pyruvate Phosphate Dikinase, domain 2"/>
    <property type="match status" value="1"/>
</dbReference>
<dbReference type="InterPro" id="IPR013815">
    <property type="entry name" value="ATP_grasp_subdomain_1"/>
</dbReference>
<dbReference type="InterPro" id="IPR008279">
    <property type="entry name" value="PEP-util_enz_mobile_dom"/>
</dbReference>
<dbReference type="InterPro" id="IPR018274">
    <property type="entry name" value="PEP_util_AS"/>
</dbReference>
<dbReference type="InterPro" id="IPR000121">
    <property type="entry name" value="PEP_util_C"/>
</dbReference>
<dbReference type="InterPro" id="IPR023151">
    <property type="entry name" value="PEP_util_CS"/>
</dbReference>
<dbReference type="InterPro" id="IPR036637">
    <property type="entry name" value="Phosphohistidine_dom_sf"/>
</dbReference>
<dbReference type="InterPro" id="IPR002192">
    <property type="entry name" value="PPDK_AMP/ATP-bd"/>
</dbReference>
<dbReference type="InterPro" id="IPR010121">
    <property type="entry name" value="Pyruvate_phosphate_dikinase"/>
</dbReference>
<dbReference type="InterPro" id="IPR015813">
    <property type="entry name" value="Pyrv/PenolPyrv_kinase-like_dom"/>
</dbReference>
<dbReference type="InterPro" id="IPR040442">
    <property type="entry name" value="Pyrv_kinase-like_dom_sf"/>
</dbReference>
<dbReference type="NCBIfam" id="NF004531">
    <property type="entry name" value="PRK05878.1"/>
    <property type="match status" value="1"/>
</dbReference>
<dbReference type="NCBIfam" id="TIGR01828">
    <property type="entry name" value="pyru_phos_dikin"/>
    <property type="match status" value="1"/>
</dbReference>
<dbReference type="PANTHER" id="PTHR22931">
    <property type="entry name" value="PHOSPHOENOLPYRUVATE DIKINASE-RELATED"/>
    <property type="match status" value="1"/>
</dbReference>
<dbReference type="PANTHER" id="PTHR22931:SF9">
    <property type="entry name" value="PYRUVATE, PHOSPHATE DIKINASE 1, CHLOROPLASTIC"/>
    <property type="match status" value="1"/>
</dbReference>
<dbReference type="Pfam" id="PF00391">
    <property type="entry name" value="PEP-utilizers"/>
    <property type="match status" value="1"/>
</dbReference>
<dbReference type="Pfam" id="PF02896">
    <property type="entry name" value="PEP-utilizers_C"/>
    <property type="match status" value="1"/>
</dbReference>
<dbReference type="Pfam" id="PF01326">
    <property type="entry name" value="PPDK_N"/>
    <property type="match status" value="2"/>
</dbReference>
<dbReference type="PIRSF" id="PIRSF000853">
    <property type="entry name" value="PPDK"/>
    <property type="match status" value="1"/>
</dbReference>
<dbReference type="SUPFAM" id="SSF56059">
    <property type="entry name" value="Glutathione synthetase ATP-binding domain-like"/>
    <property type="match status" value="1"/>
</dbReference>
<dbReference type="SUPFAM" id="SSF51621">
    <property type="entry name" value="Phosphoenolpyruvate/pyruvate domain"/>
    <property type="match status" value="1"/>
</dbReference>
<dbReference type="SUPFAM" id="SSF52009">
    <property type="entry name" value="Phosphohistidine domain"/>
    <property type="match status" value="1"/>
</dbReference>
<dbReference type="PROSITE" id="PS00742">
    <property type="entry name" value="PEP_ENZYMES_2"/>
    <property type="match status" value="1"/>
</dbReference>
<dbReference type="PROSITE" id="PS00370">
    <property type="entry name" value="PEP_ENZYMES_PHOS_SITE"/>
    <property type="match status" value="1"/>
</dbReference>
<name>PPDK_RICPR</name>
<proteinExistence type="inferred from homology"/>
<sequence length="880" mass="98302">MNKLIYYFGNNGSDGNASMNNILGNKGAGLAEMSNLKLPIPNGFTITTELCNYFYKHNNNFPKNFQNELQQAISKLEVTTGKIFGSTTSNPLLLSVRSGSTVSMPGMMDTILNLGMNNEVCNALADACGNKLFALDSYRRFLEMYGSTVLSIPSDLFEQIYENHKIQADIYKDSDITVELLEKIIDDFKRLHIKYDKQLINDPYEQLESAIKAVLYSWKNNRAIIYRKLNNISEDFGTAINIQEMVFGNLGKTSATGVAFTRSPSTGEKKLFGEFLINAQGEDIVSGTRTPMPIIANDSNSMQAMMPEVFKELSQIAKKLEEHYLDMQDIEFTIENNKLYILQTRTAKRTAIAAINIAVQMVKEKLISKEQALMRIDPESLNQLLHTRIDYSKGLTSIAEGLPASPGAATGIVVFSPYDAEKLSHHHKVILVRHDTSPEDINGMHVSSGILTIRGGMTSHAAVVARGMGKPCVCGTNNLSIDEQKQILIAGDIVIKQGDIITIDGGSGKIFLGEMPLIQPTFSEESKLILDWADEISSLKVRANAETVNDALVSIKFGAQGIGLCRSEHMFFDKNKIPLVREMIIAPDIERRQCALQKLLPLQTEDFKSLFRVMKNKPVNIRLLDPPLHEFLPTTEEDKKNLANSLNLPLSMIHQRLHAMHEVNPMLGHRGCRLGICLPEIYQMQIEAIFTAIFELHKKEHIESNLELMIPLISNVAEIKKLKMYIYEVVQELEQRYSYKFSFTLGTMIELPRAALESKKIAKEVDYFSFGTNDLTQTTYGISRDDIASFLPYYLEEKIFESDPFTTLDEEGVGELIEIAIKRGKSSNANLKLGACGEHAGNPTSIAFFHKANLNYVSCSPYRIPIARIAAAQAKIKQGS</sequence>
<evidence type="ECO:0000250" key="1"/>
<evidence type="ECO:0000250" key="2">
    <source>
        <dbReference type="UniProtKB" id="P11155"/>
    </source>
</evidence>
<evidence type="ECO:0000250" key="3">
    <source>
        <dbReference type="UniProtKB" id="P22983"/>
    </source>
</evidence>
<evidence type="ECO:0000255" key="4"/>
<evidence type="ECO:0000305" key="5"/>
<gene>
    <name type="primary">ppdK</name>
    <name type="ordered locus">RP492</name>
</gene>
<keyword id="KW-0067">ATP-binding</keyword>
<keyword id="KW-0418">Kinase</keyword>
<keyword id="KW-0460">Magnesium</keyword>
<keyword id="KW-0479">Metal-binding</keyword>
<keyword id="KW-0547">Nucleotide-binding</keyword>
<keyword id="KW-0597">Phosphoprotein</keyword>
<keyword id="KW-1185">Reference proteome</keyword>
<keyword id="KW-0808">Transferase</keyword>
<accession>Q9ZD55</accession>
<protein>
    <recommendedName>
        <fullName>Pyruvate, phosphate dikinase</fullName>
        <ecNumber evidence="3">2.7.9.1</ecNumber>
    </recommendedName>
    <alternativeName>
        <fullName>Pyruvate, orthophosphate dikinase</fullName>
    </alternativeName>
</protein>
<organism>
    <name type="scientific">Rickettsia prowazekii (strain Madrid E)</name>
    <dbReference type="NCBI Taxonomy" id="272947"/>
    <lineage>
        <taxon>Bacteria</taxon>
        <taxon>Pseudomonadati</taxon>
        <taxon>Pseudomonadota</taxon>
        <taxon>Alphaproteobacteria</taxon>
        <taxon>Rickettsiales</taxon>
        <taxon>Rickettsiaceae</taxon>
        <taxon>Rickettsieae</taxon>
        <taxon>Rickettsia</taxon>
        <taxon>typhus group</taxon>
    </lineage>
</organism>
<reference key="1">
    <citation type="journal article" date="1998" name="Nature">
        <title>The genome sequence of Rickettsia prowazekii and the origin of mitochondria.</title>
        <authorList>
            <person name="Andersson S.G.E."/>
            <person name="Zomorodipour A."/>
            <person name="Andersson J.O."/>
            <person name="Sicheritz-Ponten T."/>
            <person name="Alsmark U.C.M."/>
            <person name="Podowski R.M."/>
            <person name="Naeslund A.K."/>
            <person name="Eriksson A.-S."/>
            <person name="Winkler H.H."/>
            <person name="Kurland C.G."/>
        </authorList>
    </citation>
    <scope>NUCLEOTIDE SEQUENCE [LARGE SCALE GENOMIC DNA]</scope>
    <source>
        <strain>Madrid E</strain>
    </source>
</reference>
<feature type="chain" id="PRO_0000147049" description="Pyruvate, phosphate dikinase">
    <location>
        <begin position="1"/>
        <end position="880"/>
    </location>
</feature>
<feature type="region of interest" description="N-terminal">
    <location>
        <begin position="1"/>
        <end position="348"/>
    </location>
</feature>
<feature type="region of interest" description="Linker 1">
    <location>
        <begin position="349"/>
        <end position="405"/>
    </location>
</feature>
<feature type="region of interest" description="Central">
    <location>
        <begin position="406"/>
        <end position="503"/>
    </location>
</feature>
<feature type="region of interest" description="Linker 2">
    <location>
        <begin position="504"/>
        <end position="538"/>
    </location>
</feature>
<feature type="region of interest" description="C-terminal">
    <location>
        <begin position="539"/>
        <end position="880"/>
    </location>
</feature>
<feature type="active site" description="Tele-phosphohistidine intermediate" evidence="2">
    <location>
        <position position="460"/>
    </location>
</feature>
<feature type="active site" description="Proton donor" evidence="2">
    <location>
        <position position="836"/>
    </location>
</feature>
<feature type="binding site" evidence="4">
    <location>
        <position position="97"/>
    </location>
    <ligand>
        <name>ATP</name>
        <dbReference type="ChEBI" id="CHEBI:30616"/>
    </ligand>
</feature>
<feature type="binding site" evidence="2">
    <location>
        <position position="566"/>
    </location>
    <ligand>
        <name>substrate</name>
    </ligand>
</feature>
<feature type="binding site" evidence="2">
    <location>
        <position position="622"/>
    </location>
    <ligand>
        <name>substrate</name>
    </ligand>
</feature>
<feature type="binding site" evidence="2">
    <location>
        <position position="750"/>
    </location>
    <ligand>
        <name>Mg(2+)</name>
        <dbReference type="ChEBI" id="CHEBI:18420"/>
    </ligand>
</feature>
<feature type="binding site" evidence="2">
    <location>
        <position position="750"/>
    </location>
    <ligand>
        <name>substrate</name>
    </ligand>
</feature>
<feature type="binding site" evidence="2">
    <location>
        <position position="771"/>
    </location>
    <ligand>
        <name>substrate</name>
    </ligand>
</feature>
<feature type="binding site" evidence="2">
    <location>
        <position position="772"/>
    </location>
    <ligand>
        <name>substrate</name>
    </ligand>
</feature>
<feature type="binding site" evidence="2">
    <location>
        <position position="773"/>
    </location>
    <ligand>
        <name>substrate</name>
    </ligand>
</feature>
<feature type="binding site" evidence="2">
    <location>
        <position position="774"/>
    </location>
    <ligand>
        <name>Mg(2+)</name>
        <dbReference type="ChEBI" id="CHEBI:18420"/>
    </ligand>
</feature>
<feature type="binding site" evidence="2">
    <location>
        <position position="774"/>
    </location>
    <ligand>
        <name>substrate</name>
    </ligand>
</feature>
<feature type="modified residue" description="Phosphothreonine; by PDRP1" evidence="1">
    <location>
        <position position="458"/>
    </location>
</feature>
<comment type="function">
    <text evidence="3">Catalyzes the reversible phosphorylation of pyruvate and phosphate.</text>
</comment>
<comment type="catalytic activity">
    <reaction evidence="3">
        <text>pyruvate + phosphate + ATP = phosphoenolpyruvate + AMP + diphosphate + H(+)</text>
        <dbReference type="Rhea" id="RHEA:10756"/>
        <dbReference type="ChEBI" id="CHEBI:15361"/>
        <dbReference type="ChEBI" id="CHEBI:15378"/>
        <dbReference type="ChEBI" id="CHEBI:30616"/>
        <dbReference type="ChEBI" id="CHEBI:33019"/>
        <dbReference type="ChEBI" id="CHEBI:43474"/>
        <dbReference type="ChEBI" id="CHEBI:58702"/>
        <dbReference type="ChEBI" id="CHEBI:456215"/>
        <dbReference type="EC" id="2.7.9.1"/>
    </reaction>
</comment>
<comment type="cofactor">
    <cofactor evidence="2">
        <name>Mg(2+)</name>
        <dbReference type="ChEBI" id="CHEBI:18420"/>
    </cofactor>
</comment>
<comment type="activity regulation">
    <text evidence="1">Activated by light-induced dephosphorylation. Inhibited by dark-induced phosphorylation. Both reactions are catalyzed by PDRP1 (By similarity).</text>
</comment>
<comment type="subunit">
    <text evidence="1">Homodimer.</text>
</comment>
<comment type="domain">
    <text evidence="1">The N-terminal domain contains the ATP/Pi active site, the central domain the pyrophosphate/phosphate carrier histidine, and the C-terminal domain the pyruvate active site.</text>
</comment>
<comment type="PTM">
    <text evidence="1">Phosphorylation of Thr-458 in the dark inactivates the enzyme. Dephosphorylation upon light stimulation reactivates the enzyme (By similarity).</text>
</comment>
<comment type="miscellaneous">
    <text>The reaction takes place in three steps, each mediated by a carrier histidine residue located on the surface of the central domain. The two first partial reactions are catalyzed at an active site located on the N-terminal domain, and the third partial reaction is catalyzed at an active site located on the C-terminal domain. For catalytic turnover, the central domain swivels from the concave surface of the N-terminal domain to that of the C-terminal domain.</text>
</comment>
<comment type="similarity">
    <text evidence="5">Belongs to the PEP-utilizing enzyme family.</text>
</comment>